<sequence length="302" mass="34945">MTTTMEYHNPVLLHPTVDGLDIKPDGIYVDVTFGGGGHSKEILRRLGPNGKLFAFDQDEDALANALPDERFTLINENFRFIKRFLRFHGIKAVDGILADLGVSSHQFDVPERGFSTRFDAELDMRMSQKNDLNAYRVVNEYEEQDLRRVFFDYGELKNAPVLARTIVEARHHRPIKTTDELKEVLKKYLPEKVRNKILAQIYQAIRIEVNQEMDVLKEFIEQSLEILKPGGRFSVISYHSLEDRLVKRFIKNGMFEGEPERDFYGNFSVPFKTIGKLIVPDDEEIKINNRARSAKLRIAEKI</sequence>
<organism>
    <name type="scientific">Flavobacterium johnsoniae (strain ATCC 17061 / DSM 2064 / JCM 8514 / BCRC 14874 / CCUG 350202 / NBRC 14942 / NCIMB 11054 / UW101)</name>
    <name type="common">Cytophaga johnsonae</name>
    <dbReference type="NCBI Taxonomy" id="376686"/>
    <lineage>
        <taxon>Bacteria</taxon>
        <taxon>Pseudomonadati</taxon>
        <taxon>Bacteroidota</taxon>
        <taxon>Flavobacteriia</taxon>
        <taxon>Flavobacteriales</taxon>
        <taxon>Flavobacteriaceae</taxon>
        <taxon>Flavobacterium</taxon>
    </lineage>
</organism>
<accession>A5FIX6</accession>
<proteinExistence type="inferred from homology"/>
<evidence type="ECO:0000255" key="1">
    <source>
        <dbReference type="HAMAP-Rule" id="MF_01007"/>
    </source>
</evidence>
<name>RSMH_FLAJ1</name>
<feature type="chain" id="PRO_1000083996" description="Ribosomal RNA small subunit methyltransferase H">
    <location>
        <begin position="1"/>
        <end position="302"/>
    </location>
</feature>
<feature type="binding site" evidence="1">
    <location>
        <begin position="36"/>
        <end position="38"/>
    </location>
    <ligand>
        <name>S-adenosyl-L-methionine</name>
        <dbReference type="ChEBI" id="CHEBI:59789"/>
    </ligand>
</feature>
<feature type="binding site" evidence="1">
    <location>
        <position position="56"/>
    </location>
    <ligand>
        <name>S-adenosyl-L-methionine</name>
        <dbReference type="ChEBI" id="CHEBI:59789"/>
    </ligand>
</feature>
<feature type="binding site" evidence="1">
    <location>
        <position position="84"/>
    </location>
    <ligand>
        <name>S-adenosyl-L-methionine</name>
        <dbReference type="ChEBI" id="CHEBI:59789"/>
    </ligand>
</feature>
<feature type="binding site" evidence="1">
    <location>
        <position position="99"/>
    </location>
    <ligand>
        <name>S-adenosyl-L-methionine</name>
        <dbReference type="ChEBI" id="CHEBI:59789"/>
    </ligand>
</feature>
<feature type="binding site" evidence="1">
    <location>
        <position position="106"/>
    </location>
    <ligand>
        <name>S-adenosyl-L-methionine</name>
        <dbReference type="ChEBI" id="CHEBI:59789"/>
    </ligand>
</feature>
<comment type="function">
    <text evidence="1">Specifically methylates the N4 position of cytidine in position 1402 (C1402) of 16S rRNA.</text>
</comment>
<comment type="catalytic activity">
    <reaction evidence="1">
        <text>cytidine(1402) in 16S rRNA + S-adenosyl-L-methionine = N(4)-methylcytidine(1402) in 16S rRNA + S-adenosyl-L-homocysteine + H(+)</text>
        <dbReference type="Rhea" id="RHEA:42928"/>
        <dbReference type="Rhea" id="RHEA-COMP:10286"/>
        <dbReference type="Rhea" id="RHEA-COMP:10287"/>
        <dbReference type="ChEBI" id="CHEBI:15378"/>
        <dbReference type="ChEBI" id="CHEBI:57856"/>
        <dbReference type="ChEBI" id="CHEBI:59789"/>
        <dbReference type="ChEBI" id="CHEBI:74506"/>
        <dbReference type="ChEBI" id="CHEBI:82748"/>
        <dbReference type="EC" id="2.1.1.199"/>
    </reaction>
</comment>
<comment type="subcellular location">
    <subcellularLocation>
        <location evidence="1">Cytoplasm</location>
    </subcellularLocation>
</comment>
<comment type="similarity">
    <text evidence="1">Belongs to the methyltransferase superfamily. RsmH family.</text>
</comment>
<gene>
    <name evidence="1" type="primary">rsmH</name>
    <name type="synonym">mraW</name>
    <name type="ordered locus">Fjoh_1803</name>
</gene>
<protein>
    <recommendedName>
        <fullName evidence="1">Ribosomal RNA small subunit methyltransferase H</fullName>
        <ecNumber evidence="1">2.1.1.199</ecNumber>
    </recommendedName>
    <alternativeName>
        <fullName evidence="1">16S rRNA m(4)C1402 methyltransferase</fullName>
    </alternativeName>
    <alternativeName>
        <fullName evidence="1">rRNA (cytosine-N(4)-)-methyltransferase RsmH</fullName>
    </alternativeName>
</protein>
<reference key="1">
    <citation type="journal article" date="2009" name="Appl. Environ. Microbiol.">
        <title>Novel features of the polysaccharide-digesting gliding bacterium Flavobacterium johnsoniae as revealed by genome sequence analysis.</title>
        <authorList>
            <person name="McBride M.J."/>
            <person name="Xie G."/>
            <person name="Martens E.C."/>
            <person name="Lapidus A."/>
            <person name="Henrissat B."/>
            <person name="Rhodes R.G."/>
            <person name="Goltsman E."/>
            <person name="Wang W."/>
            <person name="Xu J."/>
            <person name="Hunnicutt D.W."/>
            <person name="Staroscik A.M."/>
            <person name="Hoover T.R."/>
            <person name="Cheng Y.Q."/>
            <person name="Stein J.L."/>
        </authorList>
    </citation>
    <scope>NUCLEOTIDE SEQUENCE [LARGE SCALE GENOMIC DNA]</scope>
    <source>
        <strain>ATCC 17061 / DSM 2064 / JCM 8514 / BCRC 14874 / CCUG 350202 / NBRC 14942 / NCIMB 11054 / UW101</strain>
    </source>
</reference>
<dbReference type="EC" id="2.1.1.199" evidence="1"/>
<dbReference type="EMBL" id="CP000685">
    <property type="protein sequence ID" value="ABQ04835.1"/>
    <property type="molecule type" value="Genomic_DNA"/>
</dbReference>
<dbReference type="RefSeq" id="WP_012023879.1">
    <property type="nucleotide sequence ID" value="NC_009441.1"/>
</dbReference>
<dbReference type="SMR" id="A5FIX6"/>
<dbReference type="STRING" id="376686.Fjoh_1803"/>
<dbReference type="KEGG" id="fjo:Fjoh_1803"/>
<dbReference type="eggNOG" id="COG0275">
    <property type="taxonomic scope" value="Bacteria"/>
</dbReference>
<dbReference type="HOGENOM" id="CLU_038422_2_0_10"/>
<dbReference type="Proteomes" id="UP000006694">
    <property type="component" value="Chromosome"/>
</dbReference>
<dbReference type="GO" id="GO:0005737">
    <property type="term" value="C:cytoplasm"/>
    <property type="evidence" value="ECO:0007669"/>
    <property type="project" value="UniProtKB-SubCell"/>
</dbReference>
<dbReference type="GO" id="GO:0071424">
    <property type="term" value="F:rRNA (cytosine-N4-)-methyltransferase activity"/>
    <property type="evidence" value="ECO:0007669"/>
    <property type="project" value="UniProtKB-UniRule"/>
</dbReference>
<dbReference type="GO" id="GO:0070475">
    <property type="term" value="P:rRNA base methylation"/>
    <property type="evidence" value="ECO:0007669"/>
    <property type="project" value="UniProtKB-UniRule"/>
</dbReference>
<dbReference type="Gene3D" id="1.10.150.170">
    <property type="entry name" value="Putative methyltransferase TM0872, insert domain"/>
    <property type="match status" value="1"/>
</dbReference>
<dbReference type="Gene3D" id="3.40.50.150">
    <property type="entry name" value="Vaccinia Virus protein VP39"/>
    <property type="match status" value="1"/>
</dbReference>
<dbReference type="HAMAP" id="MF_01007">
    <property type="entry name" value="16SrRNA_methyltr_H"/>
    <property type="match status" value="1"/>
</dbReference>
<dbReference type="InterPro" id="IPR002903">
    <property type="entry name" value="RsmH"/>
</dbReference>
<dbReference type="InterPro" id="IPR023397">
    <property type="entry name" value="SAM-dep_MeTrfase_MraW_recog"/>
</dbReference>
<dbReference type="InterPro" id="IPR029063">
    <property type="entry name" value="SAM-dependent_MTases_sf"/>
</dbReference>
<dbReference type="NCBIfam" id="TIGR00006">
    <property type="entry name" value="16S rRNA (cytosine(1402)-N(4))-methyltransferase RsmH"/>
    <property type="match status" value="1"/>
</dbReference>
<dbReference type="PANTHER" id="PTHR11265:SF0">
    <property type="entry name" value="12S RRNA N4-METHYLCYTIDINE METHYLTRANSFERASE"/>
    <property type="match status" value="1"/>
</dbReference>
<dbReference type="PANTHER" id="PTHR11265">
    <property type="entry name" value="S-ADENOSYL-METHYLTRANSFERASE MRAW"/>
    <property type="match status" value="1"/>
</dbReference>
<dbReference type="Pfam" id="PF01795">
    <property type="entry name" value="Methyltransf_5"/>
    <property type="match status" value="1"/>
</dbReference>
<dbReference type="PIRSF" id="PIRSF004486">
    <property type="entry name" value="MraW"/>
    <property type="match status" value="1"/>
</dbReference>
<dbReference type="SUPFAM" id="SSF81799">
    <property type="entry name" value="Putative methyltransferase TM0872, insert domain"/>
    <property type="match status" value="1"/>
</dbReference>
<dbReference type="SUPFAM" id="SSF53335">
    <property type="entry name" value="S-adenosyl-L-methionine-dependent methyltransferases"/>
    <property type="match status" value="1"/>
</dbReference>
<keyword id="KW-0963">Cytoplasm</keyword>
<keyword id="KW-0489">Methyltransferase</keyword>
<keyword id="KW-0698">rRNA processing</keyword>
<keyword id="KW-0949">S-adenosyl-L-methionine</keyword>
<keyword id="KW-0808">Transferase</keyword>